<sequence length="384" mass="42693">MASLFLTIISLLFAAFSSSVVEAAYSNGYTIPKLLPNPIDSCWRRNPYWASNRRALADCAVGFGKSAVGGKYGSIYVVTNPSDDPENPRPGTLRYAVIQSKPLWITFARDMVIVLRNELIMNSYKTIDGRGAKVEIAYGPCITIQHVSHVIIHGISIHDCKPGKSGRVRSSPTHVGSRKGSDGDAIAIFDSSHIWIDHCFFSRCQDGLIDVLHASTAVTISNNYFTQHDKVMLLGHNDNNVEDKIMRVTIAFNHFGPGLIERMPRVRRGYAHVANNRYEKWQMYAIGGSADPTIFSEGNYFVASDDPSKKQVTKRIDSGYDWKRWKWRTSKDVFKNGAYFVPSGYGTVTPLYGRAERFPVSHGSLVPLLTSSAGPLHCYSGRIC</sequence>
<reference key="1">
    <citation type="journal article" date="2000" name="Nature">
        <title>Sequence and analysis of chromosome 1 of the plant Arabidopsis thaliana.</title>
        <authorList>
            <person name="Theologis A."/>
            <person name="Ecker J.R."/>
            <person name="Palm C.J."/>
            <person name="Federspiel N.A."/>
            <person name="Kaul S."/>
            <person name="White O."/>
            <person name="Alonso J."/>
            <person name="Altafi H."/>
            <person name="Araujo R."/>
            <person name="Bowman C.L."/>
            <person name="Brooks S.Y."/>
            <person name="Buehler E."/>
            <person name="Chan A."/>
            <person name="Chao Q."/>
            <person name="Chen H."/>
            <person name="Cheuk R.F."/>
            <person name="Chin C.W."/>
            <person name="Chung M.K."/>
            <person name="Conn L."/>
            <person name="Conway A.B."/>
            <person name="Conway A.R."/>
            <person name="Creasy T.H."/>
            <person name="Dewar K."/>
            <person name="Dunn P."/>
            <person name="Etgu P."/>
            <person name="Feldblyum T.V."/>
            <person name="Feng J.-D."/>
            <person name="Fong B."/>
            <person name="Fujii C.Y."/>
            <person name="Gill J.E."/>
            <person name="Goldsmith A.D."/>
            <person name="Haas B."/>
            <person name="Hansen N.F."/>
            <person name="Hughes B."/>
            <person name="Huizar L."/>
            <person name="Hunter J.L."/>
            <person name="Jenkins J."/>
            <person name="Johnson-Hopson C."/>
            <person name="Khan S."/>
            <person name="Khaykin E."/>
            <person name="Kim C.J."/>
            <person name="Koo H.L."/>
            <person name="Kremenetskaia I."/>
            <person name="Kurtz D.B."/>
            <person name="Kwan A."/>
            <person name="Lam B."/>
            <person name="Langin-Hooper S."/>
            <person name="Lee A."/>
            <person name="Lee J.M."/>
            <person name="Lenz C.A."/>
            <person name="Li J.H."/>
            <person name="Li Y.-P."/>
            <person name="Lin X."/>
            <person name="Liu S.X."/>
            <person name="Liu Z.A."/>
            <person name="Luros J.S."/>
            <person name="Maiti R."/>
            <person name="Marziali A."/>
            <person name="Militscher J."/>
            <person name="Miranda M."/>
            <person name="Nguyen M."/>
            <person name="Nierman W.C."/>
            <person name="Osborne B.I."/>
            <person name="Pai G."/>
            <person name="Peterson J."/>
            <person name="Pham P.K."/>
            <person name="Rizzo M."/>
            <person name="Rooney T."/>
            <person name="Rowley D."/>
            <person name="Sakano H."/>
            <person name="Salzberg S.L."/>
            <person name="Schwartz J.R."/>
            <person name="Shinn P."/>
            <person name="Southwick A.M."/>
            <person name="Sun H."/>
            <person name="Tallon L.J."/>
            <person name="Tambunga G."/>
            <person name="Toriumi M.J."/>
            <person name="Town C.D."/>
            <person name="Utterback T."/>
            <person name="Van Aken S."/>
            <person name="Vaysberg M."/>
            <person name="Vysotskaia V.S."/>
            <person name="Walker M."/>
            <person name="Wu D."/>
            <person name="Yu G."/>
            <person name="Fraser C.M."/>
            <person name="Venter J.C."/>
            <person name="Davis R.W."/>
        </authorList>
    </citation>
    <scope>NUCLEOTIDE SEQUENCE [LARGE SCALE GENOMIC DNA]</scope>
    <source>
        <strain>cv. Columbia</strain>
    </source>
</reference>
<reference key="2">
    <citation type="journal article" date="2017" name="Plant J.">
        <title>Araport11: a complete reannotation of the Arabidopsis thaliana reference genome.</title>
        <authorList>
            <person name="Cheng C.Y."/>
            <person name="Krishnakumar V."/>
            <person name="Chan A.P."/>
            <person name="Thibaud-Nissen F."/>
            <person name="Schobel S."/>
            <person name="Town C.D."/>
        </authorList>
    </citation>
    <scope>GENOME REANNOTATION</scope>
    <source>
        <strain>cv. Columbia</strain>
    </source>
</reference>
<proteinExistence type="inferred from homology"/>
<name>PLY2_ARATH</name>
<gene>
    <name type="ordered locus">At1g11920</name>
    <name type="ORF">F12F1.22</name>
</gene>
<organism>
    <name type="scientific">Arabidopsis thaliana</name>
    <name type="common">Mouse-ear cress</name>
    <dbReference type="NCBI Taxonomy" id="3702"/>
    <lineage>
        <taxon>Eukaryota</taxon>
        <taxon>Viridiplantae</taxon>
        <taxon>Streptophyta</taxon>
        <taxon>Embryophyta</taxon>
        <taxon>Tracheophyta</taxon>
        <taxon>Spermatophyta</taxon>
        <taxon>Magnoliopsida</taxon>
        <taxon>eudicotyledons</taxon>
        <taxon>Gunneridae</taxon>
        <taxon>Pentapetalae</taxon>
        <taxon>rosids</taxon>
        <taxon>malvids</taxon>
        <taxon>Brassicales</taxon>
        <taxon>Brassicaceae</taxon>
        <taxon>Camelineae</taxon>
        <taxon>Arabidopsis</taxon>
    </lineage>
</organism>
<accession>O65388</accession>
<accession>F4IAK2</accession>
<comment type="catalytic activity">
    <reaction>
        <text>Eliminative cleavage of (1-&gt;4)-alpha-D-galacturonan to give oligosaccharides with 4-deoxy-alpha-D-galact-4-enuronosyl groups at their non-reducing ends.</text>
        <dbReference type="EC" id="4.2.2.2"/>
    </reaction>
</comment>
<comment type="cofactor">
    <cofactor evidence="1">
        <name>Ca(2+)</name>
        <dbReference type="ChEBI" id="CHEBI:29108"/>
    </cofactor>
    <text evidence="1">Binds 1 Ca(2+) ion. Required for its activity.</text>
</comment>
<comment type="pathway">
    <text>Glycan metabolism; pectin degradation; 2-dehydro-3-deoxy-D-gluconate from pectin: step 2/5.</text>
</comment>
<comment type="similarity">
    <text evidence="3">Belongs to the polysaccharide lyase 1 family.</text>
</comment>
<comment type="sequence caution" evidence="3">
    <conflict type="erroneous gene model prediction">
        <sequence resource="EMBL-CDS" id="AAC17625"/>
    </conflict>
</comment>
<protein>
    <recommendedName>
        <fullName>Putative pectate lyase 2</fullName>
        <ecNumber>4.2.2.2</ecNumber>
    </recommendedName>
</protein>
<feature type="signal peptide" evidence="2">
    <location>
        <begin position="1"/>
        <end position="23"/>
    </location>
</feature>
<feature type="chain" id="PRO_0000024866" description="Putative pectate lyase 2">
    <location>
        <begin position="24"/>
        <end position="384"/>
    </location>
</feature>
<feature type="active site" evidence="2">
    <location>
        <position position="262"/>
    </location>
</feature>
<feature type="binding site" evidence="1">
    <location>
        <position position="182"/>
    </location>
    <ligand>
        <name>Ca(2+)</name>
        <dbReference type="ChEBI" id="CHEBI:29108"/>
    </ligand>
</feature>
<feature type="binding site" evidence="1">
    <location>
        <position position="206"/>
    </location>
    <ligand>
        <name>Ca(2+)</name>
        <dbReference type="ChEBI" id="CHEBI:29108"/>
    </ligand>
</feature>
<feature type="binding site" evidence="1">
    <location>
        <position position="210"/>
    </location>
    <ligand>
        <name>Ca(2+)</name>
        <dbReference type="ChEBI" id="CHEBI:29108"/>
    </ligand>
</feature>
<keyword id="KW-0106">Calcium</keyword>
<keyword id="KW-0456">Lyase</keyword>
<keyword id="KW-0479">Metal-binding</keyword>
<keyword id="KW-1185">Reference proteome</keyword>
<keyword id="KW-0732">Signal</keyword>
<dbReference type="EC" id="4.2.2.2"/>
<dbReference type="EMBL" id="AC002131">
    <property type="protein sequence ID" value="AAC17625.1"/>
    <property type="status" value="ALT_SEQ"/>
    <property type="molecule type" value="Genomic_DNA"/>
</dbReference>
<dbReference type="EMBL" id="CP002684">
    <property type="protein sequence ID" value="AEE28815.1"/>
    <property type="molecule type" value="Genomic_DNA"/>
</dbReference>
<dbReference type="PIR" id="H86253">
    <property type="entry name" value="H86253"/>
</dbReference>
<dbReference type="RefSeq" id="NP_172656.1">
    <property type="nucleotide sequence ID" value="NM_101064.2"/>
</dbReference>
<dbReference type="SMR" id="O65388"/>
<dbReference type="FunCoup" id="O65388">
    <property type="interactions" value="107"/>
</dbReference>
<dbReference type="STRING" id="3702.O65388"/>
<dbReference type="CAZy" id="PL1">
    <property type="family name" value="Polysaccharide Lyase Family 1"/>
</dbReference>
<dbReference type="PaxDb" id="3702-AT1G11920.1"/>
<dbReference type="ProteomicsDB" id="234926"/>
<dbReference type="EnsemblPlants" id="AT1G11920.1">
    <property type="protein sequence ID" value="AT1G11920.1"/>
    <property type="gene ID" value="AT1G11920"/>
</dbReference>
<dbReference type="GeneID" id="837742"/>
<dbReference type="Gramene" id="AT1G11920.1">
    <property type="protein sequence ID" value="AT1G11920.1"/>
    <property type="gene ID" value="AT1G11920"/>
</dbReference>
<dbReference type="KEGG" id="ath:AT1G11920"/>
<dbReference type="Araport" id="AT1G11920"/>
<dbReference type="TAIR" id="AT1G11920"/>
<dbReference type="eggNOG" id="ENOG502QSYA">
    <property type="taxonomic scope" value="Eukaryota"/>
</dbReference>
<dbReference type="HOGENOM" id="CLU_026608_0_1_1"/>
<dbReference type="InParanoid" id="O65388"/>
<dbReference type="OMA" id="HCYSGRI"/>
<dbReference type="OrthoDB" id="1637350at2759"/>
<dbReference type="BioCyc" id="ARA:AT1G11920-MONOMER"/>
<dbReference type="UniPathway" id="UPA00545">
    <property type="reaction ID" value="UER00824"/>
</dbReference>
<dbReference type="PRO" id="PR:O65388"/>
<dbReference type="Proteomes" id="UP000006548">
    <property type="component" value="Chromosome 1"/>
</dbReference>
<dbReference type="ExpressionAtlas" id="O65388">
    <property type="expression patterns" value="baseline and differential"/>
</dbReference>
<dbReference type="GO" id="GO:0046872">
    <property type="term" value="F:metal ion binding"/>
    <property type="evidence" value="ECO:0007669"/>
    <property type="project" value="UniProtKB-KW"/>
</dbReference>
<dbReference type="GO" id="GO:0030570">
    <property type="term" value="F:pectate lyase activity"/>
    <property type="evidence" value="ECO:0007669"/>
    <property type="project" value="UniProtKB-EC"/>
</dbReference>
<dbReference type="GO" id="GO:0045490">
    <property type="term" value="P:pectin catabolic process"/>
    <property type="evidence" value="ECO:0007669"/>
    <property type="project" value="UniProtKB-UniPathway"/>
</dbReference>
<dbReference type="Gene3D" id="2.160.20.10">
    <property type="entry name" value="Single-stranded right-handed beta-helix, Pectin lyase-like"/>
    <property type="match status" value="1"/>
</dbReference>
<dbReference type="InterPro" id="IPR018082">
    <property type="entry name" value="AmbAllergen"/>
</dbReference>
<dbReference type="InterPro" id="IPR002022">
    <property type="entry name" value="Pec_lyase"/>
</dbReference>
<dbReference type="InterPro" id="IPR012334">
    <property type="entry name" value="Pectin_lyas_fold"/>
</dbReference>
<dbReference type="InterPro" id="IPR011050">
    <property type="entry name" value="Pectin_lyase_fold/virulence"/>
</dbReference>
<dbReference type="InterPro" id="IPR045032">
    <property type="entry name" value="PEL"/>
</dbReference>
<dbReference type="PANTHER" id="PTHR31683">
    <property type="entry name" value="PECTATE LYASE 18-RELATED"/>
    <property type="match status" value="1"/>
</dbReference>
<dbReference type="PANTHER" id="PTHR31683:SF105">
    <property type="entry name" value="PECTATE LYASE 2-RELATED"/>
    <property type="match status" value="1"/>
</dbReference>
<dbReference type="Pfam" id="PF00544">
    <property type="entry name" value="Pectate_lyase_4"/>
    <property type="match status" value="1"/>
</dbReference>
<dbReference type="PRINTS" id="PR00807">
    <property type="entry name" value="AMBALLERGEN"/>
</dbReference>
<dbReference type="SMART" id="SM00656">
    <property type="entry name" value="Amb_all"/>
    <property type="match status" value="1"/>
</dbReference>
<dbReference type="SUPFAM" id="SSF51126">
    <property type="entry name" value="Pectin lyase-like"/>
    <property type="match status" value="1"/>
</dbReference>
<evidence type="ECO:0000250" key="1"/>
<evidence type="ECO:0000255" key="2"/>
<evidence type="ECO:0000305" key="3"/>